<reference key="1">
    <citation type="journal article" date="2008" name="DNA Res.">
        <title>Complete genome sequence and comparative analysis of the wild-type commensal Escherichia coli strain SE11 isolated from a healthy adult.</title>
        <authorList>
            <person name="Oshima K."/>
            <person name="Toh H."/>
            <person name="Ogura Y."/>
            <person name="Sasamoto H."/>
            <person name="Morita H."/>
            <person name="Park S.-H."/>
            <person name="Ooka T."/>
            <person name="Iyoda S."/>
            <person name="Taylor T.D."/>
            <person name="Hayashi T."/>
            <person name="Itoh K."/>
            <person name="Hattori M."/>
        </authorList>
    </citation>
    <scope>NUCLEOTIDE SEQUENCE [LARGE SCALE GENOMIC DNA]</scope>
    <source>
        <strain>SE11</strain>
    </source>
</reference>
<name>MLTC_ECOSE</name>
<evidence type="ECO:0000255" key="1">
    <source>
        <dbReference type="HAMAP-Rule" id="MF_01616"/>
    </source>
</evidence>
<accession>B6I7A0</accession>
<gene>
    <name evidence="1" type="primary">mltC</name>
    <name type="ordered locus">ECSE_3232</name>
</gene>
<proteinExistence type="inferred from homology"/>
<protein>
    <recommendedName>
        <fullName evidence="1">Membrane-bound lytic murein transglycosylase C</fullName>
        <ecNumber evidence="1">4.2.2.n1</ecNumber>
    </recommendedName>
    <alternativeName>
        <fullName evidence="1">Murein lyase C</fullName>
    </alternativeName>
</protein>
<organism>
    <name type="scientific">Escherichia coli (strain SE11)</name>
    <dbReference type="NCBI Taxonomy" id="409438"/>
    <lineage>
        <taxon>Bacteria</taxon>
        <taxon>Pseudomonadati</taxon>
        <taxon>Pseudomonadota</taxon>
        <taxon>Gammaproteobacteria</taxon>
        <taxon>Enterobacterales</taxon>
        <taxon>Enterobacteriaceae</taxon>
        <taxon>Escherichia</taxon>
    </lineage>
</organism>
<dbReference type="EC" id="4.2.2.n1" evidence="1"/>
<dbReference type="EMBL" id="AP009240">
    <property type="protein sequence ID" value="BAG78756.1"/>
    <property type="molecule type" value="Genomic_DNA"/>
</dbReference>
<dbReference type="SMR" id="B6I7A0"/>
<dbReference type="CAZy" id="GH23">
    <property type="family name" value="Glycoside Hydrolase Family 23"/>
</dbReference>
<dbReference type="KEGG" id="ecy:ECSE_3232"/>
<dbReference type="HOGENOM" id="CLU_044583_0_0_6"/>
<dbReference type="Proteomes" id="UP000008199">
    <property type="component" value="Chromosome"/>
</dbReference>
<dbReference type="GO" id="GO:0009279">
    <property type="term" value="C:cell outer membrane"/>
    <property type="evidence" value="ECO:0007669"/>
    <property type="project" value="UniProtKB-SubCell"/>
</dbReference>
<dbReference type="GO" id="GO:0016798">
    <property type="term" value="F:hydrolase activity, acting on glycosyl bonds"/>
    <property type="evidence" value="ECO:0007669"/>
    <property type="project" value="InterPro"/>
</dbReference>
<dbReference type="GO" id="GO:0008933">
    <property type="term" value="F:peptidoglycan lytic transglycosylase activity"/>
    <property type="evidence" value="ECO:0007669"/>
    <property type="project" value="UniProtKB-UniRule"/>
</dbReference>
<dbReference type="GO" id="GO:0016998">
    <property type="term" value="P:cell wall macromolecule catabolic process"/>
    <property type="evidence" value="ECO:0007669"/>
    <property type="project" value="UniProtKB-UniRule"/>
</dbReference>
<dbReference type="GO" id="GO:0071555">
    <property type="term" value="P:cell wall organization"/>
    <property type="evidence" value="ECO:0007669"/>
    <property type="project" value="UniProtKB-KW"/>
</dbReference>
<dbReference type="GO" id="GO:0000270">
    <property type="term" value="P:peptidoglycan metabolic process"/>
    <property type="evidence" value="ECO:0007669"/>
    <property type="project" value="InterPro"/>
</dbReference>
<dbReference type="CDD" id="cd16893">
    <property type="entry name" value="LT_MltC_MltE"/>
    <property type="match status" value="1"/>
</dbReference>
<dbReference type="FunFam" id="1.10.530.10:FF:000002">
    <property type="entry name" value="Membrane-bound lytic murein transglycosylase C"/>
    <property type="match status" value="1"/>
</dbReference>
<dbReference type="Gene3D" id="1.10.530.10">
    <property type="match status" value="1"/>
</dbReference>
<dbReference type="HAMAP" id="MF_01616">
    <property type="entry name" value="MltC"/>
    <property type="match status" value="1"/>
</dbReference>
<dbReference type="InterPro" id="IPR023346">
    <property type="entry name" value="Lysozyme-like_dom_sf"/>
</dbReference>
<dbReference type="InterPro" id="IPR023664">
    <property type="entry name" value="Murein_transglycosylaseC"/>
</dbReference>
<dbReference type="InterPro" id="IPR024570">
    <property type="entry name" value="Murein_transglycosylaseC_N"/>
</dbReference>
<dbReference type="InterPro" id="IPR000189">
    <property type="entry name" value="Transglyc_AS"/>
</dbReference>
<dbReference type="InterPro" id="IPR008258">
    <property type="entry name" value="Transglycosylase_SLT_dom_1"/>
</dbReference>
<dbReference type="NCBIfam" id="NF008670">
    <property type="entry name" value="PRK11671.1"/>
    <property type="match status" value="1"/>
</dbReference>
<dbReference type="PANTHER" id="PTHR37423:SF2">
    <property type="entry name" value="MEMBRANE-BOUND LYTIC MUREIN TRANSGLYCOSYLASE C"/>
    <property type="match status" value="1"/>
</dbReference>
<dbReference type="PANTHER" id="PTHR37423">
    <property type="entry name" value="SOLUBLE LYTIC MUREIN TRANSGLYCOSYLASE-RELATED"/>
    <property type="match status" value="1"/>
</dbReference>
<dbReference type="Pfam" id="PF11873">
    <property type="entry name" value="Mltc_N"/>
    <property type="match status" value="1"/>
</dbReference>
<dbReference type="Pfam" id="PF01464">
    <property type="entry name" value="SLT"/>
    <property type="match status" value="1"/>
</dbReference>
<dbReference type="SUPFAM" id="SSF53955">
    <property type="entry name" value="Lysozyme-like"/>
    <property type="match status" value="1"/>
</dbReference>
<dbReference type="PROSITE" id="PS51257">
    <property type="entry name" value="PROKAR_LIPOPROTEIN"/>
    <property type="match status" value="1"/>
</dbReference>
<dbReference type="PROSITE" id="PS00922">
    <property type="entry name" value="TRANSGLYCOSYLASE"/>
    <property type="match status" value="1"/>
</dbReference>
<sequence>MKKYLALALIAPLLISCSTTKKGDTYNEAWVKDTNGFDILMGQFAHNIENIWGFKEVVIAGPKDYVKYTDQYQTRSHINFDDGTITIETIAGTEPAAHLRRAIIKTLLMGDDPSSVDLYSDVDDITISKEPFLYGQVVDNTGQPIRWEGRASNFADYLLKNRLKSRSNGLRIIYSVTINMVPNHLDKRAHKYLGMVRQASRKYGVDESLILAIMQTESSFNPYAVSRSDALGLMQVVQHTAGKDVFRSQGKSGTPSRNFLFDPASNIDTGTAYLAMLNNVYLGGIDNPTSRRYAVITAYNGGAGSVLRVFSNDKIQAANIINTMTPGDVYQTLTTRHPSAESRRYLYKVNTAQKSYRRR</sequence>
<comment type="function">
    <text evidence="1">Murein-degrading enzyme. May play a role in recycling of muropeptides during cell elongation and/or cell division.</text>
</comment>
<comment type="catalytic activity">
    <reaction evidence="1">
        <text>Exolytic cleavage of the (1-&gt;4)-beta-glycosidic linkage between N-acetylmuramic acid (MurNAc) and N-acetylglucosamine (GlcNAc) residues in peptidoglycan, from either the reducing or the non-reducing ends of the peptidoglycan chains, with concomitant formation of a 1,6-anhydrobond in the MurNAc residue.</text>
        <dbReference type="EC" id="4.2.2.n1"/>
    </reaction>
</comment>
<comment type="subcellular location">
    <subcellularLocation>
        <location evidence="1">Cell outer membrane</location>
        <topology evidence="1">Lipid-anchor</topology>
    </subcellularLocation>
</comment>
<comment type="similarity">
    <text evidence="1">Belongs to the transglycosylase Slt family.</text>
</comment>
<keyword id="KW-0998">Cell outer membrane</keyword>
<keyword id="KW-0961">Cell wall biogenesis/degradation</keyword>
<keyword id="KW-0449">Lipoprotein</keyword>
<keyword id="KW-0456">Lyase</keyword>
<keyword id="KW-0472">Membrane</keyword>
<keyword id="KW-0564">Palmitate</keyword>
<keyword id="KW-0732">Signal</keyword>
<feature type="signal peptide" evidence="1">
    <location>
        <begin position="1"/>
        <end position="16"/>
    </location>
</feature>
<feature type="chain" id="PRO_1000185926" description="Membrane-bound lytic murein transglycosylase C">
    <location>
        <begin position="17"/>
        <end position="359"/>
    </location>
</feature>
<feature type="lipid moiety-binding region" description="N-palmitoyl cysteine" evidence="1">
    <location>
        <position position="17"/>
    </location>
</feature>
<feature type="lipid moiety-binding region" description="S-diacylglycerol cysteine" evidence="1">
    <location>
        <position position="17"/>
    </location>
</feature>